<name>SPNE_DROPS</name>
<gene>
    <name type="primary">spn-E</name>
    <name type="synonym">hls</name>
    <name type="ORF">GA16329</name>
</gene>
<proteinExistence type="inferred from homology"/>
<evidence type="ECO:0000250" key="1"/>
<evidence type="ECO:0000255" key="2">
    <source>
        <dbReference type="PROSITE-ProRule" id="PRU00211"/>
    </source>
</evidence>
<evidence type="ECO:0000255" key="3">
    <source>
        <dbReference type="PROSITE-ProRule" id="PRU00541"/>
    </source>
</evidence>
<evidence type="ECO:0000255" key="4">
    <source>
        <dbReference type="PROSITE-ProRule" id="PRU00542"/>
    </source>
</evidence>
<evidence type="ECO:0000305" key="5"/>
<feature type="chain" id="PRO_0000391919" description="Probable ATP-dependent RNA helicase spindle-E">
    <location>
        <begin position="1"/>
        <end position="1433"/>
    </location>
</feature>
<feature type="domain" description="Helicase ATP-binding" evidence="3">
    <location>
        <begin position="126"/>
        <end position="294"/>
    </location>
</feature>
<feature type="domain" description="Helicase C-terminal" evidence="4">
    <location>
        <begin position="355"/>
        <end position="526"/>
    </location>
</feature>
<feature type="domain" description="Tudor" evidence="2">
    <location>
        <begin position="935"/>
        <end position="998"/>
    </location>
</feature>
<feature type="short sequence motif" description="DEAH box">
    <location>
        <begin position="240"/>
        <end position="243"/>
    </location>
</feature>
<feature type="binding site" evidence="3">
    <location>
        <begin position="139"/>
        <end position="146"/>
    </location>
    <ligand>
        <name>ATP</name>
        <dbReference type="ChEBI" id="CHEBI:30616"/>
    </ligand>
</feature>
<organism>
    <name type="scientific">Drosophila pseudoobscura pseudoobscura</name>
    <name type="common">Fruit fly</name>
    <dbReference type="NCBI Taxonomy" id="46245"/>
    <lineage>
        <taxon>Eukaryota</taxon>
        <taxon>Metazoa</taxon>
        <taxon>Ecdysozoa</taxon>
        <taxon>Arthropoda</taxon>
        <taxon>Hexapoda</taxon>
        <taxon>Insecta</taxon>
        <taxon>Pterygota</taxon>
        <taxon>Neoptera</taxon>
        <taxon>Endopterygota</taxon>
        <taxon>Diptera</taxon>
        <taxon>Brachycera</taxon>
        <taxon>Muscomorpha</taxon>
        <taxon>Ephydroidea</taxon>
        <taxon>Drosophilidae</taxon>
        <taxon>Drosophila</taxon>
        <taxon>Sophophora</taxon>
    </lineage>
</organism>
<reference key="1">
    <citation type="journal article" date="2005" name="Genome Res.">
        <title>Comparative genome sequencing of Drosophila pseudoobscura: chromosomal, gene, and cis-element evolution.</title>
        <authorList>
            <person name="Richards S."/>
            <person name="Liu Y."/>
            <person name="Bettencourt B.R."/>
            <person name="Hradecky P."/>
            <person name="Letovsky S."/>
            <person name="Nielsen R."/>
            <person name="Thornton K."/>
            <person name="Hubisz M.J."/>
            <person name="Chen R."/>
            <person name="Meisel R.P."/>
            <person name="Couronne O."/>
            <person name="Hua S."/>
            <person name="Smith M.A."/>
            <person name="Zhang P."/>
            <person name="Liu J."/>
            <person name="Bussemaker H.J."/>
            <person name="van Batenburg M.F."/>
            <person name="Howells S.L."/>
            <person name="Scherer S.E."/>
            <person name="Sodergren E."/>
            <person name="Matthews B.B."/>
            <person name="Crosby M.A."/>
            <person name="Schroeder A.J."/>
            <person name="Ortiz-Barrientos D."/>
            <person name="Rives C.M."/>
            <person name="Metzker M.L."/>
            <person name="Muzny D.M."/>
            <person name="Scott G."/>
            <person name="Steffen D."/>
            <person name="Wheeler D.A."/>
            <person name="Worley K.C."/>
            <person name="Havlak P."/>
            <person name="Durbin K.J."/>
            <person name="Egan A."/>
            <person name="Gill R."/>
            <person name="Hume J."/>
            <person name="Morgan M.B."/>
            <person name="Miner G."/>
            <person name="Hamilton C."/>
            <person name="Huang Y."/>
            <person name="Waldron L."/>
            <person name="Verduzco D."/>
            <person name="Clerc-Blankenburg K.P."/>
            <person name="Dubchak I."/>
            <person name="Noor M.A.F."/>
            <person name="Anderson W."/>
            <person name="White K.P."/>
            <person name="Clark A.G."/>
            <person name="Schaeffer S.W."/>
            <person name="Gelbart W.M."/>
            <person name="Weinstock G.M."/>
            <person name="Gibbs R.A."/>
        </authorList>
    </citation>
    <scope>NUCLEOTIDE SEQUENCE [LARGE SCALE GENOMIC DNA]</scope>
    <source>
        <strain>MV2-25 / Tucson 14011-0121.94</strain>
    </source>
</reference>
<sequence length="1433" mass="164469">MDQELMDFFDFSKEFVRKQAPRGHVSSNVHAFVTESEELEKPIKREIVGKDYVKSFVEKEKERMNGIFSSDEMAPMRNKSLDDMDSDEEYEASPEIRTDAEFYEKYYFNLNRDKSLPIYAKREEIINAINENPVVIVKGETGCGKTTQVPQYILDEGFKSKQYCNIVVTQPRRIAAISIANRVCQERQWQRGTVCGYQVGLHRQLERFADTRLLYCTTGVLLNILVNNKTLTHYTHIVLDEVHERGQEMDFLLIVIRRLLATNSRHVKVILMSATINPRELSDYFANERSAPPVIDASYGRNFTVEKYYRDQLQTINWEGHQEDINSPGITQEGYRSAIKTILVIDNMERNERSTGKSYNQSLREGSILIFLPGVGEINNMSDMLKDMANHDSIMKFNMVRCHSLMSSDDQREIFQPSPPGYRKIIMATNVAESSITVPDVSYIIDFCLEKVLFTDTFTNFSSLRLVWASKTNCRQRAGRVGRLRNGRVYRMVTKSFYQRELSEYSVPEMLRSPLQNCVLKAKELKMGTPVEMLALALSPPNLSDICNTILLLKEVGALFPTVDGTYDPCDGDITYWGTIMSKLPLDTRLSRLIILGYIFNLLDEAIIIAAGLTVRGIFVDSTRLGSDNYWMHYVFADGSGSDLVGIWRVYLTYLNMCENGLQKDASIQWAKRFHLSLRALSEMNLLVLDLRLRCEKLSLLPLNFPISRISDDSEKAIMLKVIIAGSFYPNYFVQSKSTSGDDRNMFSVISGLDPCRTVYFTSFTDRTMGELYTRKVKQLFPETQIPPENMDVTFGQGSEKIFVTFKNDIYKPEGTTYVHVPGRIKAEVYKALRLRTYCNHHSLRVMEPMSALKYVKDKKIGKVVEGRWIPPSKPVAVELLALPSVFDKIIVGRITNIVSCGKFFFQPESFENCIANMSEHFNNPQQLQNCVRNAGAITKGLMLLAKRQGKYQRATVVRVDTQNSSNVRFYVRFVDYGDIERLPMTQLRLMSQDLLRHYRDLPPRLFECRLALVQPASMVSTYNAWPQKADDMLHALAKGGRVQLEIYSLVQNVAAVMIHLREGNLNELLVKEKLARRTNEDYMSRVDHDFRMRKQECRGYVSQQERQQVNEEYLRSKQLPQDMDLSPPPPQECKSLIILKGPFSTLESTVFSTMQSGMSKTVRIDPCSVNFVLLDTEPQDQHAKMVVAASISSAGRHNDVLTLRSTSIMPNIPGFAAIMTLIFCPRAQLNANTANSRYVSILAGLGYHPQTMKSYYEDHDLVINLDVNIDEHDVLLINQIRYMMDSVFFNLEGELRPIAGHADRVLIHDTIYRALNRLLSKNRNFIVCNPKSSDYVWQDMEESGEPDPQPYGRRSIFPMHTIPELHEENMDTVLDLIANCKEMYDYRNFEGSFDPMTCRLCKQYLESVSELRLHLLTQLHLDREKEVGYPMD</sequence>
<comment type="function">
    <text evidence="1">Probable ATP-binding RNA helicase which plays a central role during spermatogenesis and oogenesis by repressing transposable elements and preventing their mobilization, which is essential for the germline integrity. Acts via the piRNA metabolic process, which mediates the repression of transposable elements during meiosis by forming complexes composed of piRNAs and Piwi and govern the methylation and subsequent repression of transposons. Involved in the repression of LTR retrotransposon copia. Also involved in telomere regulation by repressing specialized telomeric retroelements HeT-A, TAHRE, and TART; Drosophila telomeres being maintained by transposition of specialized telomeric retroelements. Involved in telomeric trans-silencing, a repression mechanism by which a transposon or a transgene inserted in subtelomeric heterochromatin has the capacity to repress in trans in the female germline, a homologous transposon, or transgene located in euchromatin. Involved in the repression of testis-expressed Stellate genes by the homologous Su(Ste) repeats. Required for anteroposterior and dorsoventral axis formation during oogenesis (By similarity).</text>
</comment>
<comment type="catalytic activity">
    <reaction>
        <text>ATP + H2O = ADP + phosphate + H(+)</text>
        <dbReference type="Rhea" id="RHEA:13065"/>
        <dbReference type="ChEBI" id="CHEBI:15377"/>
        <dbReference type="ChEBI" id="CHEBI:15378"/>
        <dbReference type="ChEBI" id="CHEBI:30616"/>
        <dbReference type="ChEBI" id="CHEBI:43474"/>
        <dbReference type="ChEBI" id="CHEBI:456216"/>
        <dbReference type="EC" id="3.6.4.13"/>
    </reaction>
</comment>
<comment type="subcellular location">
    <subcellularLocation>
        <location evidence="1">Cytoplasm</location>
    </subcellularLocation>
    <text evidence="1">Component of the nuage, also named P granule, a germ-cell-specific organelle required to repress transposon during meiosis.</text>
</comment>
<comment type="similarity">
    <text evidence="5">Belongs to the DEAD box helicase family. DEAH subfamily.</text>
</comment>
<accession>Q296Q5</accession>
<protein>
    <recommendedName>
        <fullName>Probable ATP-dependent RNA helicase spindle-E</fullName>
        <ecNumber>3.6.4.13</ecNumber>
    </recommendedName>
    <alternativeName>
        <fullName>Homeless</fullName>
    </alternativeName>
</protein>
<keyword id="KW-0067">ATP-binding</keyword>
<keyword id="KW-0963">Cytoplasm</keyword>
<keyword id="KW-0217">Developmental protein</keyword>
<keyword id="KW-0221">Differentiation</keyword>
<keyword id="KW-0347">Helicase</keyword>
<keyword id="KW-0378">Hydrolase</keyword>
<keyword id="KW-0469">Meiosis</keyword>
<keyword id="KW-0547">Nucleotide-binding</keyword>
<keyword id="KW-0896">Oogenesis</keyword>
<keyword id="KW-1185">Reference proteome</keyword>
<keyword id="KW-0943">RNA-mediated gene silencing</keyword>
<keyword id="KW-0744">Spermatogenesis</keyword>
<dbReference type="EC" id="3.6.4.13"/>
<dbReference type="EMBL" id="CM000070">
    <property type="protein sequence ID" value="EAL28403.2"/>
    <property type="molecule type" value="Genomic_DNA"/>
</dbReference>
<dbReference type="RefSeq" id="XP_001359258.2">
    <property type="nucleotide sequence ID" value="XM_001359221.3"/>
</dbReference>
<dbReference type="SMR" id="Q296Q5"/>
<dbReference type="FunCoup" id="Q296Q5">
    <property type="interactions" value="181"/>
</dbReference>
<dbReference type="STRING" id="46245.Q296Q5"/>
<dbReference type="EnsemblMetazoa" id="FBtr0285897">
    <property type="protein sequence ID" value="FBpp0284335"/>
    <property type="gene ID" value="FBgn0076345"/>
</dbReference>
<dbReference type="GeneID" id="4802318"/>
<dbReference type="KEGG" id="dpo:4802318"/>
<dbReference type="CTD" id="41919"/>
<dbReference type="eggNOG" id="KOG0920">
    <property type="taxonomic scope" value="Eukaryota"/>
</dbReference>
<dbReference type="HOGENOM" id="CLU_002601_1_0_1"/>
<dbReference type="InParanoid" id="Q296Q5"/>
<dbReference type="OMA" id="QRSAYCS"/>
<dbReference type="Proteomes" id="UP000001819">
    <property type="component" value="Chromosome 2"/>
</dbReference>
<dbReference type="Bgee" id="FBgn0076345">
    <property type="expression patterns" value="Expressed in female reproductive system and 3 other cell types or tissues"/>
</dbReference>
<dbReference type="ExpressionAtlas" id="Q296Q5">
    <property type="expression patterns" value="baseline"/>
</dbReference>
<dbReference type="GO" id="GO:0005737">
    <property type="term" value="C:cytoplasm"/>
    <property type="evidence" value="ECO:0007669"/>
    <property type="project" value="UniProtKB-SubCell"/>
</dbReference>
<dbReference type="GO" id="GO:0005524">
    <property type="term" value="F:ATP binding"/>
    <property type="evidence" value="ECO:0007669"/>
    <property type="project" value="UniProtKB-KW"/>
</dbReference>
<dbReference type="GO" id="GO:0016887">
    <property type="term" value="F:ATP hydrolysis activity"/>
    <property type="evidence" value="ECO:0007669"/>
    <property type="project" value="RHEA"/>
</dbReference>
<dbReference type="GO" id="GO:0003723">
    <property type="term" value="F:RNA binding"/>
    <property type="evidence" value="ECO:0007669"/>
    <property type="project" value="TreeGrafter"/>
</dbReference>
<dbReference type="GO" id="GO:0003724">
    <property type="term" value="F:RNA helicase activity"/>
    <property type="evidence" value="ECO:0007669"/>
    <property type="project" value="UniProtKB-EC"/>
</dbReference>
<dbReference type="GO" id="GO:0051321">
    <property type="term" value="P:meiotic cell cycle"/>
    <property type="evidence" value="ECO:0007669"/>
    <property type="project" value="UniProtKB-KW"/>
</dbReference>
<dbReference type="GO" id="GO:0048477">
    <property type="term" value="P:oogenesis"/>
    <property type="evidence" value="ECO:0007669"/>
    <property type="project" value="UniProtKB-KW"/>
</dbReference>
<dbReference type="GO" id="GO:0031047">
    <property type="term" value="P:regulatory ncRNA-mediated gene silencing"/>
    <property type="evidence" value="ECO:0007669"/>
    <property type="project" value="UniProtKB-KW"/>
</dbReference>
<dbReference type="GO" id="GO:0007283">
    <property type="term" value="P:spermatogenesis"/>
    <property type="evidence" value="ECO:0007669"/>
    <property type="project" value="UniProtKB-KW"/>
</dbReference>
<dbReference type="CDD" id="cd18791">
    <property type="entry name" value="SF2_C_RHA"/>
    <property type="match status" value="1"/>
</dbReference>
<dbReference type="FunFam" id="3.40.50.300:FF:001676">
    <property type="entry name" value="DExH-box ATP-dependent RNA helicase DExH7 chloroplastic"/>
    <property type="match status" value="1"/>
</dbReference>
<dbReference type="Gene3D" id="1.20.120.1080">
    <property type="match status" value="1"/>
</dbReference>
<dbReference type="Gene3D" id="2.30.30.140">
    <property type="match status" value="1"/>
</dbReference>
<dbReference type="Gene3D" id="2.40.50.90">
    <property type="match status" value="1"/>
</dbReference>
<dbReference type="Gene3D" id="3.40.50.300">
    <property type="entry name" value="P-loop containing nucleotide triphosphate hydrolases"/>
    <property type="match status" value="2"/>
</dbReference>
<dbReference type="InterPro" id="IPR011545">
    <property type="entry name" value="DEAD/DEAH_box_helicase_dom"/>
</dbReference>
<dbReference type="InterPro" id="IPR007502">
    <property type="entry name" value="Helicase-assoc_dom"/>
</dbReference>
<dbReference type="InterPro" id="IPR014001">
    <property type="entry name" value="Helicase_ATP-bd"/>
</dbReference>
<dbReference type="InterPro" id="IPR001650">
    <property type="entry name" value="Helicase_C-like"/>
</dbReference>
<dbReference type="InterPro" id="IPR027417">
    <property type="entry name" value="P-loop_NTPase"/>
</dbReference>
<dbReference type="InterPro" id="IPR035437">
    <property type="entry name" value="SNase_OB-fold_sf"/>
</dbReference>
<dbReference type="InterPro" id="IPR002999">
    <property type="entry name" value="Tudor"/>
</dbReference>
<dbReference type="InterPro" id="IPR013087">
    <property type="entry name" value="Znf_C2H2_type"/>
</dbReference>
<dbReference type="PANTHER" id="PTHR18934">
    <property type="entry name" value="ATP-DEPENDENT RNA HELICASE"/>
    <property type="match status" value="1"/>
</dbReference>
<dbReference type="PANTHER" id="PTHR18934:SF113">
    <property type="entry name" value="ATP-DEPENDENT RNA HELICASE TDRD9"/>
    <property type="match status" value="1"/>
</dbReference>
<dbReference type="Pfam" id="PF00270">
    <property type="entry name" value="DEAD"/>
    <property type="match status" value="1"/>
</dbReference>
<dbReference type="Pfam" id="PF21010">
    <property type="entry name" value="HA2_C"/>
    <property type="match status" value="1"/>
</dbReference>
<dbReference type="Pfam" id="PF00271">
    <property type="entry name" value="Helicase_C"/>
    <property type="match status" value="1"/>
</dbReference>
<dbReference type="Pfam" id="PF00567">
    <property type="entry name" value="TUDOR"/>
    <property type="match status" value="1"/>
</dbReference>
<dbReference type="SMART" id="SM00487">
    <property type="entry name" value="DEXDc"/>
    <property type="match status" value="1"/>
</dbReference>
<dbReference type="SMART" id="SM00847">
    <property type="entry name" value="HA2"/>
    <property type="match status" value="1"/>
</dbReference>
<dbReference type="SMART" id="SM00490">
    <property type="entry name" value="HELICc"/>
    <property type="match status" value="1"/>
</dbReference>
<dbReference type="SMART" id="SM00333">
    <property type="entry name" value="TUDOR"/>
    <property type="match status" value="1"/>
</dbReference>
<dbReference type="SUPFAM" id="SSF52540">
    <property type="entry name" value="P-loop containing nucleoside triphosphate hydrolases"/>
    <property type="match status" value="1"/>
</dbReference>
<dbReference type="SUPFAM" id="SSF63748">
    <property type="entry name" value="Tudor/PWWP/MBT"/>
    <property type="match status" value="1"/>
</dbReference>
<dbReference type="PROSITE" id="PS51192">
    <property type="entry name" value="HELICASE_ATP_BIND_1"/>
    <property type="match status" value="1"/>
</dbReference>
<dbReference type="PROSITE" id="PS51194">
    <property type="entry name" value="HELICASE_CTER"/>
    <property type="match status" value="1"/>
</dbReference>
<dbReference type="PROSITE" id="PS50304">
    <property type="entry name" value="TUDOR"/>
    <property type="match status" value="1"/>
</dbReference>